<accession>Q0CLP4</accession>
<feature type="chain" id="PRO_0000399621" description="Respiratory supercomplex factor 1, mitochondrial">
    <location>
        <begin position="1"/>
        <end position="180"/>
    </location>
</feature>
<feature type="transmembrane region" description="Helical" evidence="3">
    <location>
        <begin position="32"/>
        <end position="48"/>
    </location>
</feature>
<feature type="transmembrane region" description="Helical" evidence="3">
    <location>
        <begin position="68"/>
        <end position="85"/>
    </location>
</feature>
<feature type="domain" description="HIG1" evidence="3">
    <location>
        <begin position="5"/>
        <end position="96"/>
    </location>
</feature>
<feature type="coiled-coil region" evidence="2">
    <location>
        <begin position="88"/>
        <end position="108"/>
    </location>
</feature>
<gene>
    <name type="primary">rcf1</name>
    <name type="synonym">aim31</name>
    <name type="ORF">ATEG_05390</name>
</gene>
<keyword id="KW-0175">Coiled coil</keyword>
<keyword id="KW-0472">Membrane</keyword>
<keyword id="KW-0496">Mitochondrion</keyword>
<keyword id="KW-1185">Reference proteome</keyword>
<keyword id="KW-0812">Transmembrane</keyword>
<keyword id="KW-1133">Transmembrane helix</keyword>
<comment type="function">
    <text evidence="1">Cytochrome c oxidase subunit which plays a role in assembly of respiratory supercomplexes.</text>
</comment>
<comment type="subunit">
    <text evidence="1">Associates with the respiratory chain complex III/complex IV supercomplex.</text>
</comment>
<comment type="subcellular location">
    <subcellularLocation>
        <location evidence="3">Mitochondrion membrane</location>
        <topology evidence="3">Multi-pass membrane protein</topology>
    </subcellularLocation>
</comment>
<comment type="similarity">
    <text evidence="4">Belongs to the RCF1 family.</text>
</comment>
<reference key="1">
    <citation type="submission" date="2005-09" db="EMBL/GenBank/DDBJ databases">
        <title>Annotation of the Aspergillus terreus NIH2624 genome.</title>
        <authorList>
            <person name="Birren B.W."/>
            <person name="Lander E.S."/>
            <person name="Galagan J.E."/>
            <person name="Nusbaum C."/>
            <person name="Devon K."/>
            <person name="Henn M."/>
            <person name="Ma L.-J."/>
            <person name="Jaffe D.B."/>
            <person name="Butler J."/>
            <person name="Alvarez P."/>
            <person name="Gnerre S."/>
            <person name="Grabherr M."/>
            <person name="Kleber M."/>
            <person name="Mauceli E.W."/>
            <person name="Brockman W."/>
            <person name="Rounsley S."/>
            <person name="Young S.K."/>
            <person name="LaButti K."/>
            <person name="Pushparaj V."/>
            <person name="DeCaprio D."/>
            <person name="Crawford M."/>
            <person name="Koehrsen M."/>
            <person name="Engels R."/>
            <person name="Montgomery P."/>
            <person name="Pearson M."/>
            <person name="Howarth C."/>
            <person name="Larson L."/>
            <person name="Luoma S."/>
            <person name="White J."/>
            <person name="Alvarado L."/>
            <person name="Kodira C.D."/>
            <person name="Zeng Q."/>
            <person name="Oleary S."/>
            <person name="Yandava C."/>
            <person name="Denning D.W."/>
            <person name="Nierman W.C."/>
            <person name="Milne T."/>
            <person name="Madden K."/>
        </authorList>
    </citation>
    <scope>NUCLEOTIDE SEQUENCE [LARGE SCALE GENOMIC DNA]</scope>
    <source>
        <strain>NIH 2624 / FGSC A1156</strain>
    </source>
</reference>
<evidence type="ECO:0000250" key="1"/>
<evidence type="ECO:0000255" key="2"/>
<evidence type="ECO:0000255" key="3">
    <source>
        <dbReference type="PROSITE-ProRule" id="PRU00836"/>
    </source>
</evidence>
<evidence type="ECO:0000305" key="4"/>
<sequence length="180" mass="20684">MSDPLPSSFEDNPQFEEETGLQKFRRRLKEEPLIPLGCAATCYALYRAYRSMKAGDSVEMNRMFRARIYAQAFTLVAVVAGGMYFKTERQQRREFEKAVEERKSQEKRDAWLRELEIRDQEDRGWRERHAAMEAAANEAAKKAAVKPTAEQDAARSVIEAADQKSLGVLDAVMELMSRQK</sequence>
<proteinExistence type="inferred from homology"/>
<protein>
    <recommendedName>
        <fullName>Respiratory supercomplex factor 1, mitochondrial</fullName>
    </recommendedName>
</protein>
<dbReference type="EMBL" id="CH476600">
    <property type="protein sequence ID" value="EAU34459.1"/>
    <property type="molecule type" value="Genomic_DNA"/>
</dbReference>
<dbReference type="RefSeq" id="XP_001214568.1">
    <property type="nucleotide sequence ID" value="XM_001214568.1"/>
</dbReference>
<dbReference type="STRING" id="341663.Q0CLP4"/>
<dbReference type="EnsemblFungi" id="EAU34459">
    <property type="protein sequence ID" value="EAU34459"/>
    <property type="gene ID" value="ATEG_05390"/>
</dbReference>
<dbReference type="GeneID" id="4320642"/>
<dbReference type="VEuPathDB" id="FungiDB:ATEG_05390"/>
<dbReference type="eggNOG" id="KOG4431">
    <property type="taxonomic scope" value="Eukaryota"/>
</dbReference>
<dbReference type="HOGENOM" id="CLU_087356_0_2_1"/>
<dbReference type="OMA" id="QRWIREL"/>
<dbReference type="OrthoDB" id="6604018at2759"/>
<dbReference type="Proteomes" id="UP000007963">
    <property type="component" value="Unassembled WGS sequence"/>
</dbReference>
<dbReference type="GO" id="GO:0031966">
    <property type="term" value="C:mitochondrial membrane"/>
    <property type="evidence" value="ECO:0007669"/>
    <property type="project" value="UniProtKB-SubCell"/>
</dbReference>
<dbReference type="GO" id="GO:0097250">
    <property type="term" value="P:mitochondrial respirasome assembly"/>
    <property type="evidence" value="ECO:0007669"/>
    <property type="project" value="TreeGrafter"/>
</dbReference>
<dbReference type="Gene3D" id="6.10.140.1320">
    <property type="match status" value="1"/>
</dbReference>
<dbReference type="InterPro" id="IPR007667">
    <property type="entry name" value="Hypoxia_induced_domain"/>
</dbReference>
<dbReference type="InterPro" id="IPR050355">
    <property type="entry name" value="RCF1"/>
</dbReference>
<dbReference type="PANTHER" id="PTHR12297:SF3">
    <property type="entry name" value="HIG1 DOMAIN FAMILY MEMBER 1A"/>
    <property type="match status" value="1"/>
</dbReference>
<dbReference type="PANTHER" id="PTHR12297">
    <property type="entry name" value="HYPOXIA-INDUCBILE GENE 1 HIG1 -RELATED"/>
    <property type="match status" value="1"/>
</dbReference>
<dbReference type="Pfam" id="PF04588">
    <property type="entry name" value="HIG_1_N"/>
    <property type="match status" value="1"/>
</dbReference>
<dbReference type="PROSITE" id="PS51503">
    <property type="entry name" value="HIG1"/>
    <property type="match status" value="1"/>
</dbReference>
<name>RCF1_ASPTN</name>
<organism>
    <name type="scientific">Aspergillus terreus (strain NIH 2624 / FGSC A1156)</name>
    <dbReference type="NCBI Taxonomy" id="341663"/>
    <lineage>
        <taxon>Eukaryota</taxon>
        <taxon>Fungi</taxon>
        <taxon>Dikarya</taxon>
        <taxon>Ascomycota</taxon>
        <taxon>Pezizomycotina</taxon>
        <taxon>Eurotiomycetes</taxon>
        <taxon>Eurotiomycetidae</taxon>
        <taxon>Eurotiales</taxon>
        <taxon>Aspergillaceae</taxon>
        <taxon>Aspergillus</taxon>
        <taxon>Aspergillus subgen. Circumdati</taxon>
    </lineage>
</organism>